<dbReference type="EMBL" id="M63112">
    <property type="protein sequence ID" value="AAA42153.1"/>
    <property type="molecule type" value="mRNA"/>
</dbReference>
<dbReference type="EMBL" id="M59467">
    <property type="protein sequence ID" value="AAA42154.1"/>
    <property type="molecule type" value="Genomic_DNA"/>
</dbReference>
<dbReference type="EMBL" id="X84997">
    <property type="protein sequence ID" value="CAA59355.1"/>
    <property type="molecule type" value="Genomic_DNA"/>
</dbReference>
<dbReference type="EMBL" id="X52467">
    <property type="protein sequence ID" value="CAA36705.1"/>
    <property type="molecule type" value="Genomic_DNA"/>
</dbReference>
<dbReference type="PIR" id="A36302">
    <property type="entry name" value="A36302"/>
</dbReference>
<dbReference type="RefSeq" id="NP_036816.4">
    <property type="nucleotide sequence ID" value="NM_012684.4"/>
</dbReference>
<dbReference type="STRING" id="10116.ENSRNOP00000073073"/>
<dbReference type="GlyCosmos" id="P13432">
    <property type="glycosylation" value="2 sites, No reported glycans"/>
</dbReference>
<dbReference type="GlyGen" id="P13432">
    <property type="glycosylation" value="3 sites"/>
</dbReference>
<dbReference type="PaxDb" id="10116-ENSRNOP00000035658"/>
<dbReference type="GeneID" id="24867"/>
<dbReference type="KEGG" id="rno:24867"/>
<dbReference type="UCSC" id="RGD:3953">
    <property type="organism name" value="rat"/>
</dbReference>
<dbReference type="AGR" id="RGD:3953"/>
<dbReference type="CTD" id="10879"/>
<dbReference type="RGD" id="3953">
    <property type="gene designation" value="Vcsa1"/>
</dbReference>
<dbReference type="InParanoid" id="P13432"/>
<dbReference type="PhylomeDB" id="P13432"/>
<dbReference type="PRO" id="PR:P13432"/>
<dbReference type="Proteomes" id="UP000002494">
    <property type="component" value="Unplaced"/>
</dbReference>
<dbReference type="GO" id="GO:0005576">
    <property type="term" value="C:extracellular region"/>
    <property type="evidence" value="ECO:0000314"/>
    <property type="project" value="UniProtKB"/>
</dbReference>
<dbReference type="GO" id="GO:0004866">
    <property type="term" value="F:endopeptidase inhibitor activity"/>
    <property type="evidence" value="ECO:0000314"/>
    <property type="project" value="UniProtKB"/>
</dbReference>
<dbReference type="GO" id="GO:0005179">
    <property type="term" value="F:hormone activity"/>
    <property type="evidence" value="ECO:0007669"/>
    <property type="project" value="UniProtKB-KW"/>
</dbReference>
<dbReference type="GO" id="GO:0030414">
    <property type="term" value="F:peptidase inhibitor activity"/>
    <property type="evidence" value="ECO:0000314"/>
    <property type="project" value="UniProtKB"/>
</dbReference>
<dbReference type="GO" id="GO:0071222">
    <property type="term" value="P:cellular response to lipopolysaccharide"/>
    <property type="evidence" value="ECO:0000314"/>
    <property type="project" value="UniProtKB"/>
</dbReference>
<dbReference type="GO" id="GO:0010466">
    <property type="term" value="P:negative regulation of peptidase activity"/>
    <property type="evidence" value="ECO:0000314"/>
    <property type="project" value="UniProtKB"/>
</dbReference>
<dbReference type="GO" id="GO:0051930">
    <property type="term" value="P:regulation of sensory perception of pain"/>
    <property type="evidence" value="ECO:0000314"/>
    <property type="project" value="UniProtKB"/>
</dbReference>
<dbReference type="InterPro" id="IPR026288">
    <property type="entry name" value="SMR-like"/>
</dbReference>
<dbReference type="PANTHER" id="PTHR14179">
    <property type="entry name" value="SMR1-RELATED"/>
    <property type="match status" value="1"/>
</dbReference>
<dbReference type="PANTHER" id="PTHR14179:SF14">
    <property type="entry name" value="SUBMAXILLARY GLAND ANDROGEN REGULATED PROTEIN 2 LIKE-RELATED"/>
    <property type="match status" value="1"/>
</dbReference>
<dbReference type="Pfam" id="PF15621">
    <property type="entry name" value="PROL5-SMR"/>
    <property type="match status" value="1"/>
</dbReference>
<gene>
    <name type="primary">Vcsa1</name>
    <name type="synonym">Smr1</name>
</gene>
<comment type="function">
    <text>Sialorphin may be involved in the modulation of mineral balance between at least four systems: kidney, bone, tooth and circulation.</text>
</comment>
<comment type="function">
    <text>Submandibular gland peptide T is able to directly or indirectly down-regulate cardiovascular depression induced by septic shock (endotoxin stimuli), or anaphylactic challenge (nematode antigen sensitization).</text>
</comment>
<comment type="function">
    <text>Sialorphin is an endogenous inhibitor of neprilysin. Inhibits the breakdown of Met-enkephalin and substance P in isolated tissue from the dorsal zone of the rat spinal cord. Has an analgesic effect when administered to rats by intravenous injection.</text>
</comment>
<comment type="subcellular location">
    <subcellularLocation>
        <location evidence="5">Secreted</location>
    </subcellularLocation>
    <text>Found in blood. Secreted from the salivary compartment into the blood circulation, rather than through absorption by the gastro-intestinal tract.</text>
</comment>
<comment type="tissue specificity">
    <text>Expressed predominantly in the acinar cells of the submandibular gland and to lesser extent in the prostate.</text>
</comment>
<comment type="induction">
    <text>By androgens; strongly.</text>
</comment>
<comment type="PTM">
    <text>Several O-linked glycosylation sites might be present in the C-terminal part.</text>
</comment>
<comment type="miscellaneous">
    <text>SMR1 mRNA is about 1000 times more abundant in the submandibular gland of male than female.</text>
</comment>
<keyword id="KW-0165">Cleavage on pair of basic residues</keyword>
<keyword id="KW-0903">Direct protein sequencing</keyword>
<keyword id="KW-0325">Glycoprotein</keyword>
<keyword id="KW-0372">Hormone</keyword>
<keyword id="KW-1185">Reference proteome</keyword>
<keyword id="KW-0964">Secreted</keyword>
<keyword id="KW-0732">Signal</keyword>
<accession>P13432</accession>
<reference key="1">
    <citation type="journal article" date="1988" name="Proc. Natl. Acad. Sci. U.S.A.">
        <title>High level of accumulation of a mRNA coding for a precursor-like protein in the submaxillary gland of male rats.</title>
        <authorList>
            <person name="Rosinski-Chupin I."/>
            <person name="Tronik D."/>
            <person name="Rougeon F."/>
        </authorList>
    </citation>
    <scope>NUCLEOTIDE SEQUENCE [MRNA]</scope>
    <source>
        <tissue>Submandibular gland</tissue>
    </source>
</reference>
<reference key="2">
    <citation type="journal article" date="1990" name="DNA Cell Biol.">
        <title>The gene encoding SMR1, a precursor-like polypeptide of the male rat submaxillary gland, has the same organization as the preprothyrotropin-releasing hormone gene.</title>
        <authorList>
            <person name="Rosinski-Chupin I."/>
            <person name="Rougeon F."/>
        </authorList>
    </citation>
    <scope>NUCLEOTIDE SEQUENCE [GENOMIC DNA]</scope>
    <scope>VARIANT LEU-114</scope>
    <source>
        <strain>Wistar</strain>
    </source>
</reference>
<reference key="3">
    <citation type="journal article" date="1995" name="Gene">
        <title>Various transcripts are generated from the VCSA1 gene by alternative splicing and poly(A) processing in the rat submandibular gland.</title>
        <authorList>
            <person name="Courty Y."/>
            <person name="Rosinski-Chupin I."/>
            <person name="Rougeon F."/>
        </authorList>
    </citation>
    <scope>NUCLEOTIDE SEQUENCE [GENOMIC DNA]</scope>
    <scope>VARIANT LEU-114</scope>
    <source>
        <strain>Wistar</strain>
    </source>
</reference>
<reference key="4">
    <citation type="journal article" date="1994" name="Eur. J. Biochem.">
        <title>Selective processing of submandibular rat 1 protein at dibasic cleavage sites. Salivary and bloodstream secretion products.</title>
        <authorList>
            <person name="Rougeot C."/>
            <person name="Rosinski-Chupin I."/>
            <person name="Njamkepo E."/>
            <person name="Rougeon F."/>
        </authorList>
    </citation>
    <scope>PROTEIN SEQUENCE OF 23-33</scope>
    <scope>SUBCELLULAR LOCATION</scope>
    <source>
        <tissue>Submandibular gland</tissue>
    </source>
</reference>
<reference key="5">
    <citation type="journal article" date="1997" name="Am. J. Physiol.">
        <title>A novel submandibular gland peptide protects against endotoxic and anaphylactic shock.</title>
        <authorList>
            <person name="Mathison R.D."/>
            <person name="Befus A.D."/>
            <person name="Davison J.S."/>
        </authorList>
    </citation>
    <scope>PROTEIN SEQUENCE OF 138-144</scope>
    <scope>FUNCTION</scope>
    <source>
        <tissue>Submandibular gland</tissue>
    </source>
</reference>
<reference key="6">
    <citation type="journal article" date="1997" name="Am. J. Physiol.">
        <title>Targets for SMR1-pentapeptide suggest a link between the circulating peptide and mineral transport.</title>
        <authorList>
            <person name="Rougeot C."/>
            <person name="Vienet R."/>
            <person name="Cardona A."/>
            <person name="Le Doledec L."/>
            <person name="Grognet J.M."/>
            <person name="Rougeon F."/>
        </authorList>
    </citation>
    <scope>FUNCTION</scope>
</reference>
<reference key="7">
    <citation type="journal article" date="2003" name="Proc. Natl. Acad. Sci. U.S.A.">
        <title>Sialorphin, a natural inhibitor of rat membrane-bound neutral endopeptidase that displays analgesic activity.</title>
        <authorList>
            <person name="Rougeot C."/>
            <person name="Messaoudi M."/>
            <person name="Hermitte V."/>
            <person name="Rigault A.G."/>
            <person name="Blisnick T."/>
            <person name="Dugave C."/>
            <person name="Desor D."/>
            <person name="Rougeon F."/>
        </authorList>
    </citation>
    <scope>FUNCTION OF SIALORPHIN</scope>
</reference>
<protein>
    <recommendedName>
        <fullName>SMR1 protein</fullName>
    </recommendedName>
    <alternativeName>
        <fullName>VCS-alpha 1</fullName>
    </alternativeName>
    <component>
        <recommendedName>
            <fullName>SMR1-related undecapeptide</fullName>
        </recommendedName>
    </component>
    <component>
        <recommendedName>
            <fullName>SMR1-related hexapeptide</fullName>
        </recommendedName>
    </component>
    <component>
        <recommendedName>
            <fullName>Sialorphin</fullName>
        </recommendedName>
        <alternativeName>
            <fullName>SMR1-related pentapeptide</fullName>
        </alternativeName>
    </component>
    <component>
        <recommendedName>
            <fullName>Submandibular gland peptide T</fullName>
            <shortName>SGP-T</shortName>
        </recommendedName>
    </component>
</protein>
<name>SMR1_RAT</name>
<feature type="signal peptide" evidence="5">
    <location>
        <begin position="1"/>
        <end position="22"/>
    </location>
</feature>
<feature type="chain" id="PRO_0000022369" description="SMR1 protein">
    <location>
        <begin position="23"/>
        <end position="146"/>
    </location>
</feature>
<feature type="peptide" id="PRO_0000022370" description="SMR1-related undecapeptide">
    <location>
        <begin position="23"/>
        <end position="33"/>
    </location>
</feature>
<feature type="peptide" id="PRO_0000022371" description="SMR1-related hexapeptide">
    <location>
        <begin position="28"/>
        <end position="33"/>
    </location>
</feature>
<feature type="peptide" id="PRO_0000022372" description="Sialorphin">
    <location>
        <begin position="29"/>
        <end position="33"/>
    </location>
</feature>
<feature type="peptide" id="PRO_0000022373" description="Submandibular gland peptide T">
    <location>
        <begin position="138"/>
        <end position="144"/>
    </location>
</feature>
<feature type="region of interest" description="Disordered" evidence="2">
    <location>
        <begin position="23"/>
        <end position="43"/>
    </location>
</feature>
<feature type="region of interest" description="Disordered" evidence="2">
    <location>
        <begin position="99"/>
        <end position="146"/>
    </location>
</feature>
<feature type="compositionally biased region" description="Polar residues" evidence="2">
    <location>
        <begin position="109"/>
        <end position="139"/>
    </location>
</feature>
<feature type="glycosylation site" description="N-linked (GlcNAc...) asparagine" evidence="1">
    <location>
        <position position="129"/>
    </location>
</feature>
<feature type="glycosylation site" description="N-linked (GlcNAc...) asparagine" evidence="1">
    <location>
        <position position="136"/>
    </location>
</feature>
<feature type="sequence variant" evidence="3 4">
    <original>H</original>
    <variation>L</variation>
    <location>
        <position position="114"/>
    </location>
</feature>
<proteinExistence type="evidence at protein level"/>
<sequence length="146" mass="15970">MKSLYLIFGLWILLACFQSGEGVRGPRRQHNPRRQQDPSTLPHYLGLQPDPNGGQIGVTITIPLNLQPPRVLVNLPGFITGPPLVVQGTTEYQYQWQLTAPDPTPLSNPPTQLHSTEQANTKTDAKISNTTATTQNSTDIFEGGGK</sequence>
<evidence type="ECO:0000255" key="1"/>
<evidence type="ECO:0000256" key="2">
    <source>
        <dbReference type="SAM" id="MobiDB-lite"/>
    </source>
</evidence>
<evidence type="ECO:0000269" key="3">
    <source>
    </source>
</evidence>
<evidence type="ECO:0000269" key="4">
    <source>
    </source>
</evidence>
<evidence type="ECO:0000269" key="5">
    <source>
    </source>
</evidence>
<organism>
    <name type="scientific">Rattus norvegicus</name>
    <name type="common">Rat</name>
    <dbReference type="NCBI Taxonomy" id="10116"/>
    <lineage>
        <taxon>Eukaryota</taxon>
        <taxon>Metazoa</taxon>
        <taxon>Chordata</taxon>
        <taxon>Craniata</taxon>
        <taxon>Vertebrata</taxon>
        <taxon>Euteleostomi</taxon>
        <taxon>Mammalia</taxon>
        <taxon>Eutheria</taxon>
        <taxon>Euarchontoglires</taxon>
        <taxon>Glires</taxon>
        <taxon>Rodentia</taxon>
        <taxon>Myomorpha</taxon>
        <taxon>Muroidea</taxon>
        <taxon>Muridae</taxon>
        <taxon>Murinae</taxon>
        <taxon>Rattus</taxon>
    </lineage>
</organism>